<organism>
    <name type="scientific">Aspergillus fumigatus (strain ATCC MYA-4609 / CBS 101355 / FGSC A1100 / Af293)</name>
    <name type="common">Neosartorya fumigata</name>
    <dbReference type="NCBI Taxonomy" id="330879"/>
    <lineage>
        <taxon>Eukaryota</taxon>
        <taxon>Fungi</taxon>
        <taxon>Dikarya</taxon>
        <taxon>Ascomycota</taxon>
        <taxon>Pezizomycotina</taxon>
        <taxon>Eurotiomycetes</taxon>
        <taxon>Eurotiomycetidae</taxon>
        <taxon>Eurotiales</taxon>
        <taxon>Aspergillaceae</taxon>
        <taxon>Aspergillus</taxon>
        <taxon>Aspergillus subgen. Fumigati</taxon>
    </lineage>
</organism>
<proteinExistence type="evidence at protein level"/>
<protein>
    <recommendedName>
        <fullName evidence="20">Transcription regulator srbA precursor</fullName>
    </recommendedName>
    <alternativeName>
        <fullName evidence="20">Sterol regulatory element-binding protein A</fullName>
    </alternativeName>
    <component>
        <recommendedName>
            <fullName evidence="21 22 23">Cleavage-activated transcription regulator srbA</fullName>
        </recommendedName>
    </component>
</protein>
<comment type="function">
    <text evidence="8 11 16">Precursor of the transcription factor srbA, which is embedded in the endoplasmic reticulum membrane (PubMed:23104569, PubMed:27303716, PubMed:34964293). Low oxygen or sterol conditions promote processing of this form, releasing the transcription factor form that translocates into the nucleus and activates transcription of genes required for adaptation to anaerobic growth (PubMed:23104569, PubMed:27303716, PubMed:34964293).</text>
</comment>
<comment type="function">
    <molecule>Cleavage-activated transcription regulator srbA</molecule>
    <text evidence="4 5 6 7 9 10 12 13 14 15 17 18 19">Transcription factor that regulates sterol biosynthesis and hyphal morphology (PubMed:18989462). Plays a critical role in ergosterol biosynthesis, resistance to the azole class of antifungal drugs, and in maintenance of cell polarity (PubMed:18989462, PubMed:22006005, PubMed:22144905, PubMed:25107308, PubMed:25375670, PubMed:27438727, PubMed:27934927, PubMed:28052140). Directly binds erg11A/cyp51A upstream DNA sequence at tandem repeats, called TR34 and TR46, that produce duplicated binding sites (PubMed:22006005, PubMed:27934927, PubMed:35467427, PubMed:35575535). Also mediates regulation of iron acquisition in response to hypoxia and low iron conditions via activation of extra- and intracellular siderophore production (PubMed:22144905, PubMed:22260221, PubMed:25375670, PubMed:37093084). Positively regulates the expression of the other hypoxia adaptation key transcription factor srbB (PubMed:25375670). Required for the azole-sensing and response to azole stress (PubMed:28050634). Binds the high-affinity sites 5'-A-T-C-G/A-T/G-A/G-C/T-G/C-A-T-3' of target promoters (PubMed:22260221). Required for virulence in murine models of invasive pulmonary aspergillosis (IPA) (PubMed:18989462).</text>
</comment>
<comment type="subcellular location">
    <subcellularLocation>
        <location evidence="8">Endoplasmic reticulum membrane</location>
        <topology evidence="1">Single-pass membrane protein</topology>
    </subcellularLocation>
</comment>
<comment type="subcellular location">
    <molecule>Cleavage-activated transcription regulator srbA</molecule>
    <subcellularLocation>
        <location evidence="8">Nucleus</location>
    </subcellularLocation>
</comment>
<comment type="induction">
    <text evidence="6 9">Expression is inducedd under iron starvation conditions and hypoxia.</text>
</comment>
<comment type="PTM">
    <text evidence="8 11 16">In low oxygen or sterol conditions, undergoes proteolytic cleavage by rhomboid-type protease rbdB and is released as soluble transcription factor from the membrane.</text>
</comment>
<comment type="disruption phenotype">
    <text evidence="4 5 6 8 9 11 13 15">Impairs growth in a hypoxic environment and subsequent virulence in two distinct murine models of invasive pulmonary aspergillosis (IPA) (PubMed:18989462, PubMed:22006005, PubMed:23104569, PubMed:27303716). Decreases the expression of erg11A/cyp51A in response to fluconazole and voriconazole (PubMed:22006005). Also impairs growth during iron starvation due to iron shortage (PubMed:22144905, PubMed:25107308). Affects the expression of at least 87 genes including genes involved in sterol biosynthesis and hyphal morphology (PubMed:18989462). Leads to high susceptibility to azoles such as fluconazole and voriconazole (PubMed:18989462, PubMed:27934927, PubMed:28052140).</text>
</comment>
<evidence type="ECO:0000255" key="1"/>
<evidence type="ECO:0000255" key="2">
    <source>
        <dbReference type="PROSITE-ProRule" id="PRU00981"/>
    </source>
</evidence>
<evidence type="ECO:0000256" key="3">
    <source>
        <dbReference type="SAM" id="MobiDB-lite"/>
    </source>
</evidence>
<evidence type="ECO:0000269" key="4">
    <source>
    </source>
</evidence>
<evidence type="ECO:0000269" key="5">
    <source>
    </source>
</evidence>
<evidence type="ECO:0000269" key="6">
    <source>
    </source>
</evidence>
<evidence type="ECO:0000269" key="7">
    <source>
    </source>
</evidence>
<evidence type="ECO:0000269" key="8">
    <source>
    </source>
</evidence>
<evidence type="ECO:0000269" key="9">
    <source>
    </source>
</evidence>
<evidence type="ECO:0000269" key="10">
    <source>
    </source>
</evidence>
<evidence type="ECO:0000269" key="11">
    <source>
    </source>
</evidence>
<evidence type="ECO:0000269" key="12">
    <source>
    </source>
</evidence>
<evidence type="ECO:0000269" key="13">
    <source>
    </source>
</evidence>
<evidence type="ECO:0000269" key="14">
    <source>
    </source>
</evidence>
<evidence type="ECO:0000269" key="15">
    <source>
    </source>
</evidence>
<evidence type="ECO:0000269" key="16">
    <source>
    </source>
</evidence>
<evidence type="ECO:0000269" key="17">
    <source>
    </source>
</evidence>
<evidence type="ECO:0000269" key="18">
    <source>
    </source>
</evidence>
<evidence type="ECO:0000269" key="19">
    <source>
    </source>
</evidence>
<evidence type="ECO:0000303" key="20">
    <source>
    </source>
</evidence>
<evidence type="ECO:0000303" key="21">
    <source>
    </source>
</evidence>
<evidence type="ECO:0000303" key="22">
    <source>
    </source>
</evidence>
<evidence type="ECO:0000303" key="23">
    <source>
    </source>
</evidence>
<evidence type="ECO:0000305" key="24"/>
<name>SRBA_ASPFU</name>
<feature type="chain" id="PRO_0000460149" description="Transcription regulator srbA precursor">
    <location>
        <begin position="1"/>
        <end position="988"/>
    </location>
</feature>
<feature type="chain" id="PRO_0000460150" description="Cleavage-activated transcription regulator srbA" evidence="8 11 16">
    <location>
        <begin position="1"/>
        <end position="425"/>
    </location>
</feature>
<feature type="topological domain" description="Cytoplasmic" evidence="24">
    <location>
        <begin position="1"/>
        <end position="427"/>
    </location>
</feature>
<feature type="transmembrane region" description="Helical" evidence="1">
    <location>
        <begin position="428"/>
        <end position="447"/>
    </location>
</feature>
<feature type="topological domain" description="Lumenal" evidence="24">
    <location>
        <begin position="448"/>
        <end position="988"/>
    </location>
</feature>
<feature type="domain" description="bHLH" evidence="2">
    <location>
        <begin position="165"/>
        <end position="236"/>
    </location>
</feature>
<feature type="region of interest" description="Disordered" evidence="3">
    <location>
        <begin position="53"/>
        <end position="85"/>
    </location>
</feature>
<feature type="region of interest" description="Disordered" evidence="3">
    <location>
        <begin position="108"/>
        <end position="169"/>
    </location>
</feature>
<feature type="region of interest" description="Basic motif" evidence="2">
    <location>
        <begin position="165"/>
        <end position="178"/>
    </location>
</feature>
<feature type="region of interest" description="Helix-loop-helix motif" evidence="2">
    <location>
        <begin position="179"/>
        <end position="236"/>
    </location>
</feature>
<feature type="region of interest" description="Disordered" evidence="3">
    <location>
        <begin position="267"/>
        <end position="313"/>
    </location>
</feature>
<feature type="region of interest" description="Disordered" evidence="3">
    <location>
        <begin position="866"/>
        <end position="900"/>
    </location>
</feature>
<feature type="coiled-coil region" evidence="1">
    <location>
        <begin position="226"/>
        <end position="260"/>
    </location>
</feature>
<feature type="compositionally biased region" description="Low complexity" evidence="3">
    <location>
        <begin position="125"/>
        <end position="136"/>
    </location>
</feature>
<feature type="compositionally biased region" description="Polar residues" evidence="3">
    <location>
        <begin position="267"/>
        <end position="291"/>
    </location>
</feature>
<feature type="compositionally biased region" description="Low complexity" evidence="3">
    <location>
        <begin position="301"/>
        <end position="310"/>
    </location>
</feature>
<feature type="compositionally biased region" description="Low complexity" evidence="3">
    <location>
        <begin position="866"/>
        <end position="881"/>
    </location>
</feature>
<gene>
    <name evidence="20" type="primary">srbA</name>
    <name type="ORF">AFUA_2G01260</name>
</gene>
<dbReference type="EMBL" id="AAHF01000008">
    <property type="protein sequence ID" value="EAL87224.1"/>
    <property type="molecule type" value="Genomic_DNA"/>
</dbReference>
<dbReference type="RefSeq" id="XP_749262.1">
    <property type="nucleotide sequence ID" value="XM_744169.1"/>
</dbReference>
<dbReference type="SMR" id="Q4WIN1"/>
<dbReference type="STRING" id="330879.Q4WIN1"/>
<dbReference type="EnsemblFungi" id="EAL87224">
    <property type="protein sequence ID" value="EAL87224"/>
    <property type="gene ID" value="AFUA_2G01260"/>
</dbReference>
<dbReference type="GeneID" id="3507028"/>
<dbReference type="KEGG" id="afm:AFUA_2G01260"/>
<dbReference type="VEuPathDB" id="FungiDB:Afu2g01260"/>
<dbReference type="eggNOG" id="KOG2588">
    <property type="taxonomic scope" value="Eukaryota"/>
</dbReference>
<dbReference type="HOGENOM" id="CLU_008057_0_0_1"/>
<dbReference type="InParanoid" id="Q4WIN1"/>
<dbReference type="OMA" id="RVKTWDI"/>
<dbReference type="OrthoDB" id="2133190at2759"/>
<dbReference type="PHI-base" id="PHI:3362"/>
<dbReference type="PHI-base" id="PHI:6862"/>
<dbReference type="PHI-base" id="PHI:6873"/>
<dbReference type="Proteomes" id="UP000002530">
    <property type="component" value="Chromosome 2"/>
</dbReference>
<dbReference type="GO" id="GO:0000785">
    <property type="term" value="C:chromatin"/>
    <property type="evidence" value="ECO:0000318"/>
    <property type="project" value="GO_Central"/>
</dbReference>
<dbReference type="GO" id="GO:0005789">
    <property type="term" value="C:endoplasmic reticulum membrane"/>
    <property type="evidence" value="ECO:0000315"/>
    <property type="project" value="AspGD"/>
</dbReference>
<dbReference type="GO" id="GO:0005635">
    <property type="term" value="C:nuclear envelope"/>
    <property type="evidence" value="ECO:0000315"/>
    <property type="project" value="AspGD"/>
</dbReference>
<dbReference type="GO" id="GO:0005634">
    <property type="term" value="C:nucleus"/>
    <property type="evidence" value="ECO:0000318"/>
    <property type="project" value="GO_Central"/>
</dbReference>
<dbReference type="GO" id="GO:0001216">
    <property type="term" value="F:DNA-binding transcription activator activity"/>
    <property type="evidence" value="ECO:0000318"/>
    <property type="project" value="GO_Central"/>
</dbReference>
<dbReference type="GO" id="GO:0046983">
    <property type="term" value="F:protein dimerization activity"/>
    <property type="evidence" value="ECO:0007669"/>
    <property type="project" value="InterPro"/>
</dbReference>
<dbReference type="GO" id="GO:0000978">
    <property type="term" value="F:RNA polymerase II cis-regulatory region sequence-specific DNA binding"/>
    <property type="evidence" value="ECO:0000318"/>
    <property type="project" value="GO_Central"/>
</dbReference>
<dbReference type="GO" id="GO:0032810">
    <property type="term" value="F:sterol response element binding"/>
    <property type="evidence" value="ECO:0000314"/>
    <property type="project" value="AspGD"/>
</dbReference>
<dbReference type="GO" id="GO:0000976">
    <property type="term" value="F:transcription cis-regulatory region binding"/>
    <property type="evidence" value="ECO:0000314"/>
    <property type="project" value="AspGD"/>
</dbReference>
<dbReference type="GO" id="GO:0071456">
    <property type="term" value="P:cellular response to hypoxia"/>
    <property type="evidence" value="ECO:0000315"/>
    <property type="project" value="AspGD"/>
</dbReference>
<dbReference type="GO" id="GO:0006879">
    <property type="term" value="P:intracellular iron ion homeostasis"/>
    <property type="evidence" value="ECO:0000315"/>
    <property type="project" value="AspGD"/>
</dbReference>
<dbReference type="GO" id="GO:0045944">
    <property type="term" value="P:positive regulation of transcription by RNA polymerase II"/>
    <property type="evidence" value="ECO:0000318"/>
    <property type="project" value="GO_Central"/>
</dbReference>
<dbReference type="GO" id="GO:0006355">
    <property type="term" value="P:regulation of DNA-templated transcription"/>
    <property type="evidence" value="ECO:0000315"/>
    <property type="project" value="AspGD"/>
</dbReference>
<dbReference type="GO" id="GO:0032933">
    <property type="term" value="P:SREBP signaling pathway"/>
    <property type="evidence" value="ECO:0007669"/>
    <property type="project" value="InterPro"/>
</dbReference>
<dbReference type="GO" id="GO:0016125">
    <property type="term" value="P:sterol metabolic process"/>
    <property type="evidence" value="ECO:0000315"/>
    <property type="project" value="AspGD"/>
</dbReference>
<dbReference type="CDD" id="cd11399">
    <property type="entry name" value="bHLHzip_scHMS1_like"/>
    <property type="match status" value="1"/>
</dbReference>
<dbReference type="FunFam" id="4.10.280.10:FF:000116">
    <property type="entry name" value="Putative HLH transcription factor"/>
    <property type="match status" value="1"/>
</dbReference>
<dbReference type="Gene3D" id="4.10.280.10">
    <property type="entry name" value="Helix-loop-helix DNA-binding domain"/>
    <property type="match status" value="1"/>
</dbReference>
<dbReference type="InterPro" id="IPR011598">
    <property type="entry name" value="bHLH_dom"/>
</dbReference>
<dbReference type="InterPro" id="IPR036638">
    <property type="entry name" value="HLH_DNA-bd_sf"/>
</dbReference>
<dbReference type="InterPro" id="IPR052099">
    <property type="entry name" value="Regulatory_TF_Diverse"/>
</dbReference>
<dbReference type="InterPro" id="IPR019006">
    <property type="entry name" value="Sre1_C"/>
</dbReference>
<dbReference type="PANTHER" id="PTHR47336">
    <property type="entry name" value="TRANSCRIPTION FACTOR HMS1-RELATED"/>
    <property type="match status" value="1"/>
</dbReference>
<dbReference type="PANTHER" id="PTHR47336:SF2">
    <property type="entry name" value="TRANSCRIPTION FACTOR HMS1-RELATED"/>
    <property type="match status" value="1"/>
</dbReference>
<dbReference type="Pfam" id="PF09427">
    <property type="entry name" value="DUF2014"/>
    <property type="match status" value="1"/>
</dbReference>
<dbReference type="Pfam" id="PF00010">
    <property type="entry name" value="HLH"/>
    <property type="match status" value="1"/>
</dbReference>
<dbReference type="SMART" id="SM00353">
    <property type="entry name" value="HLH"/>
    <property type="match status" value="1"/>
</dbReference>
<dbReference type="SUPFAM" id="SSF47459">
    <property type="entry name" value="HLH, helix-loop-helix DNA-binding domain"/>
    <property type="match status" value="1"/>
</dbReference>
<dbReference type="PROSITE" id="PS50888">
    <property type="entry name" value="BHLH"/>
    <property type="match status" value="1"/>
</dbReference>
<keyword id="KW-0175">Coiled coil</keyword>
<keyword id="KW-0256">Endoplasmic reticulum</keyword>
<keyword id="KW-0472">Membrane</keyword>
<keyword id="KW-0539">Nucleus</keyword>
<keyword id="KW-1185">Reference proteome</keyword>
<keyword id="KW-0804">Transcription</keyword>
<keyword id="KW-0805">Transcription regulation</keyword>
<keyword id="KW-0812">Transmembrane</keyword>
<keyword id="KW-1133">Transmembrane helix</keyword>
<reference key="1">
    <citation type="journal article" date="2005" name="Nature">
        <title>Genomic sequence of the pathogenic and allergenic filamentous fungus Aspergillus fumigatus.</title>
        <authorList>
            <person name="Nierman W.C."/>
            <person name="Pain A."/>
            <person name="Anderson M.J."/>
            <person name="Wortman J.R."/>
            <person name="Kim H.S."/>
            <person name="Arroyo J."/>
            <person name="Berriman M."/>
            <person name="Abe K."/>
            <person name="Archer D.B."/>
            <person name="Bermejo C."/>
            <person name="Bennett J.W."/>
            <person name="Bowyer P."/>
            <person name="Chen D."/>
            <person name="Collins M."/>
            <person name="Coulsen R."/>
            <person name="Davies R."/>
            <person name="Dyer P.S."/>
            <person name="Farman M.L."/>
            <person name="Fedorova N."/>
            <person name="Fedorova N.D."/>
            <person name="Feldblyum T.V."/>
            <person name="Fischer R."/>
            <person name="Fosker N."/>
            <person name="Fraser A."/>
            <person name="Garcia J.L."/>
            <person name="Garcia M.J."/>
            <person name="Goble A."/>
            <person name="Goldman G.H."/>
            <person name="Gomi K."/>
            <person name="Griffith-Jones S."/>
            <person name="Gwilliam R."/>
            <person name="Haas B.J."/>
            <person name="Haas H."/>
            <person name="Harris D.E."/>
            <person name="Horiuchi H."/>
            <person name="Huang J."/>
            <person name="Humphray S."/>
            <person name="Jimenez J."/>
            <person name="Keller N."/>
            <person name="Khouri H."/>
            <person name="Kitamoto K."/>
            <person name="Kobayashi T."/>
            <person name="Konzack S."/>
            <person name="Kulkarni R."/>
            <person name="Kumagai T."/>
            <person name="Lafton A."/>
            <person name="Latge J.-P."/>
            <person name="Li W."/>
            <person name="Lord A."/>
            <person name="Lu C."/>
            <person name="Majoros W.H."/>
            <person name="May G.S."/>
            <person name="Miller B.L."/>
            <person name="Mohamoud Y."/>
            <person name="Molina M."/>
            <person name="Monod M."/>
            <person name="Mouyna I."/>
            <person name="Mulligan S."/>
            <person name="Murphy L.D."/>
            <person name="O'Neil S."/>
            <person name="Paulsen I."/>
            <person name="Penalva M.A."/>
            <person name="Pertea M."/>
            <person name="Price C."/>
            <person name="Pritchard B.L."/>
            <person name="Quail M.A."/>
            <person name="Rabbinowitsch E."/>
            <person name="Rawlins N."/>
            <person name="Rajandream M.A."/>
            <person name="Reichard U."/>
            <person name="Renauld H."/>
            <person name="Robson G.D."/>
            <person name="Rodriguez de Cordoba S."/>
            <person name="Rodriguez-Pena J.M."/>
            <person name="Ronning C.M."/>
            <person name="Rutter S."/>
            <person name="Salzberg S.L."/>
            <person name="Sanchez M."/>
            <person name="Sanchez-Ferrero J.C."/>
            <person name="Saunders D."/>
            <person name="Seeger K."/>
            <person name="Squares R."/>
            <person name="Squares S."/>
            <person name="Takeuchi M."/>
            <person name="Tekaia F."/>
            <person name="Turner G."/>
            <person name="Vazquez de Aldana C.R."/>
            <person name="Weidman J."/>
            <person name="White O."/>
            <person name="Woodward J.R."/>
            <person name="Yu J.-H."/>
            <person name="Fraser C.M."/>
            <person name="Galagan J.E."/>
            <person name="Asai K."/>
            <person name="Machida M."/>
            <person name="Hall N."/>
            <person name="Barrell B.G."/>
            <person name="Denning D.W."/>
        </authorList>
    </citation>
    <scope>NUCLEOTIDE SEQUENCE [LARGE SCALE GENOMIC DNA]</scope>
    <source>
        <strain>ATCC MYA-4609 / CBS 101355 / FGSC A1100 / Af293</strain>
    </source>
</reference>
<reference key="2">
    <citation type="journal article" date="2008" name="PLoS Pathog.">
        <title>A sterol-regulatory element binding protein is required for cell polarity, hypoxia adaptation, azole drug resistance, and virulence in Aspergillus fumigatus.</title>
        <authorList>
            <person name="Willger S.D."/>
            <person name="Puttikamonkul S."/>
            <person name="Kim K.H."/>
            <person name="Burritt J.B."/>
            <person name="Grahl N."/>
            <person name="Metzler L.J."/>
            <person name="Barbuch R."/>
            <person name="Bard M."/>
            <person name="Lawrence C.B."/>
            <person name="Cramer R.A. Jr."/>
        </authorList>
    </citation>
    <scope>FUNCTION</scope>
    <scope>DISRUPTION PHENOTYPE</scope>
</reference>
<reference key="3">
    <citation type="journal article" date="2011" name="PLoS Genet.">
        <title>SREBP coordinates iron and ergosterol homeostasis to mediate triazole drug and hypoxia responses in the human fungal pathogen Aspergillus fumigatus.</title>
        <authorList>
            <person name="Blatzer M."/>
            <person name="Barker B.M."/>
            <person name="Willger S.D."/>
            <person name="Beckmann N."/>
            <person name="Blosser S.J."/>
            <person name="Cornish E.J."/>
            <person name="Mazurie A."/>
            <person name="Grahl N."/>
            <person name="Haas H."/>
            <person name="Cramer R.A."/>
        </authorList>
    </citation>
    <scope>FUNCTION</scope>
    <scope>DISRUPTION PHENOTYPE</scope>
    <scope>INDUCTION</scope>
</reference>
<reference key="4">
    <citation type="journal article" date="2012" name="Antimicrob. Agents Chemother.">
        <title>SREBP-dependent triazole susceptibility in Aspergillus fumigatus is mediated through direct transcriptional regulation of erg11A (cyp51A).</title>
        <authorList>
            <person name="Blosser S.J."/>
            <person name="Cramer R.A."/>
        </authorList>
    </citation>
    <scope>FUNCTION</scope>
    <scope>DISRUPTION PHENOTYPE</scope>
    <scope>DNA-BINDING</scope>
</reference>
<reference key="5">
    <citation type="journal article" date="2012" name="BMC Syst. Biol.">
        <title>Regulatory interactions for iron homeostasis in Aspergillus fumigatus inferred by a Systems Biology approach.</title>
        <authorList>
            <person name="Linde J."/>
            <person name="Hortschansky P."/>
            <person name="Fazius E."/>
            <person name="Brakhage A.A."/>
            <person name="Guthke R."/>
            <person name="Haas H."/>
        </authorList>
    </citation>
    <scope>FUNCTION</scope>
    <scope>DNA-BINDING</scope>
</reference>
<reference key="6">
    <citation type="journal article" date="2012" name="Eukaryot. Cell">
        <title>Dsc orthologs are required for hypoxia adaptation, triazole drug responses, and fungal virulence in Aspergillus fumigatus.</title>
        <authorList>
            <person name="Willger S.D."/>
            <person name="Cornish E.J."/>
            <person name="Chung D."/>
            <person name="Fleming B.A."/>
            <person name="Lehmann M.M."/>
            <person name="Puttikamonkul S."/>
            <person name="Cramer R.A."/>
        </authorList>
    </citation>
    <scope>FUNCTION</scope>
    <scope>PROCESSING</scope>
    <scope>SUBCELLULAR LOCATION</scope>
    <scope>DISRUPTION PHENOTYPE</scope>
</reference>
<reference key="7">
    <citation type="journal article" date="2014" name="Microbiology">
        <title>Two C4-sterol methyl oxidases (Erg25) catalyse ergosterol intermediate demethylation and impact environmental stress adaptation in Aspergillus fumigatus.</title>
        <authorList>
            <person name="Blosser S.J."/>
            <person name="Merriman B."/>
            <person name="Grahl N."/>
            <person name="Chung D."/>
            <person name="Cramer R.A."/>
        </authorList>
    </citation>
    <scope>FUNCTION</scope>
    <scope>INDUCTION</scope>
    <scope>DISRUPTION PHENOTYPE</scope>
</reference>
<reference key="8">
    <citation type="journal article" date="2014" name="PLoS Pathog.">
        <title>ChIP-seq and in vivo transcriptome analyses of the Aspergillus fumigatus SREBP SrbA reveals a new regulator of the fungal hypoxia response and virulence.</title>
        <authorList>
            <person name="Chung D."/>
            <person name="Barker B.M."/>
            <person name="Carey C.C."/>
            <person name="Merriman B."/>
            <person name="Werner E.R."/>
            <person name="Lechner B.E."/>
            <person name="Dhingra S."/>
            <person name="Cheng C."/>
            <person name="Xu W."/>
            <person name="Blosser S.J."/>
            <person name="Morohashi K."/>
            <person name="Mazurie A."/>
            <person name="Mitchell T.K."/>
            <person name="Haas H."/>
            <person name="Mitchell A.P."/>
            <person name="Cramer R.A."/>
        </authorList>
    </citation>
    <scope>FUNCTION</scope>
</reference>
<reference key="9">
    <citation type="journal article" date="2016" name="MSphere">
        <title>RbdB, a Rhomboid Protease Critical for SREBP Activation and Virulence in Aspergillus fumigatus.</title>
        <authorList>
            <person name="Dhingra S."/>
            <person name="Kowalski C.H."/>
            <person name="Thammahong A."/>
            <person name="Beattie S.R."/>
            <person name="Bultman K.M."/>
            <person name="Cramer R.A."/>
        </authorList>
    </citation>
    <scope>FUNCTION</scope>
    <scope>DISRUPTION PHENOTYPE</scope>
    <scope>CLEAVAGE BY RBDB</scope>
</reference>
<reference key="10">
    <citation type="journal article" date="2016" name="PLoS Pathog.">
        <title>Sterol Biosynthesis and Azole Tolerance Is Governed by the Opposing Actions of SrbA and the CCAAT Binding Complex.</title>
        <authorList>
            <person name="Gsaller F."/>
            <person name="Hortschansky P."/>
            <person name="Furukawa T."/>
            <person name="Carr P.D."/>
            <person name="Rash B."/>
            <person name="Capilla J."/>
            <person name="Mueller C."/>
            <person name="Bracher F."/>
            <person name="Bowyer P."/>
            <person name="Haas H."/>
            <person name="Brakhage A.A."/>
            <person name="Bromley M.J."/>
        </authorList>
    </citation>
    <scope>FUNCTION</scope>
</reference>
<reference key="11">
    <citation type="journal article" date="2016" name="Sci. Rep.">
        <title>Sensitisation of an Azole-Resistant Aspergillus fumigatus Strain containing the Cyp51A-Related Mutation by Deleting the SrbA Gene.</title>
        <authorList>
            <person name="Hagiwara D."/>
            <person name="Watanabe A."/>
            <person name="Kamei K."/>
        </authorList>
    </citation>
    <scope>FUNCTION</scope>
    <scope>DISRUPTION PHENOTYPE</scope>
</reference>
<reference key="12">
    <citation type="journal article" date="2017" name="Appl. Microbiol. Biotechnol.">
        <title>Damage resistance protein (Dap) contributes to azole resistance in a sterol-regulatory-element-binding protein SrbA-dependent way.</title>
        <authorList>
            <person name="Song J."/>
            <person name="Zhai P."/>
            <person name="Lu L."/>
        </authorList>
    </citation>
    <scope>FUNCTION</scope>
</reference>
<reference key="13">
    <citation type="journal article" date="2017" name="PLoS Pathog.">
        <title>A novel Zn2-Cys6 transcription factor atrR plays a key role in an azole resistance mechanism of Aspergillus fumigatus by co-regulating cyp51A and cdr1B Expressions.</title>
        <authorList>
            <person name="Hagiwara D."/>
            <person name="Miura D."/>
            <person name="Shimizu K."/>
            <person name="Paul S."/>
            <person name="Ohba A."/>
            <person name="Gonoi T."/>
            <person name="Watanabe A."/>
            <person name="Kamei K."/>
            <person name="Shintani T."/>
            <person name="Moye-Rowley W.S."/>
            <person name="Kawamoto S."/>
            <person name="Gomi K."/>
        </authorList>
    </citation>
    <scope>FUNCTION</scope>
    <scope>DISRUPTION PHENOTYPE</scope>
</reference>
<reference key="14">
    <citation type="journal article" date="2021" name="MicrobiologyOpen">
        <title>The CCAAT-binding complex mediates azole susceptibility of Aspergillus fumigatus by suppressing SrbA expression and cleavage.</title>
        <authorList>
            <person name="Zhang C."/>
            <person name="Gao L."/>
            <person name="Ren Y."/>
            <person name="Gu H."/>
            <person name="Zhang Y."/>
            <person name="Lu L."/>
        </authorList>
    </citation>
    <scope>ACTIVATION BY CLEAVAGE</scope>
</reference>
<reference key="15">
    <citation type="journal article" date="2022" name="MBio">
        <title>Differential functions of individual transcription factor binding sites in the tandem repeats found in clinically relevant cyp51A promoters in Aspergillus fumigatus.</title>
        <authorList>
            <person name="Paul S."/>
            <person name="Verweij P.E."/>
            <person name="Melchers W.J.G."/>
            <person name="Moye-Rowley W.S."/>
        </authorList>
    </citation>
    <scope>FUNCTION</scope>
</reference>
<reference key="16">
    <citation type="journal article" date="2022" name="Microbiol. Spectr.">
        <title>Azole resistance-associated regulatory motifs within the promoter of cyp51A in Aspergillus fumigatus.</title>
        <authorList>
            <person name="Kuehbacher A."/>
            <person name="Peiffer M."/>
            <person name="Hortschansky P."/>
            <person name="Merschak P."/>
            <person name="Bromley M.J."/>
            <person name="Haas H."/>
            <person name="Brakhage A.A."/>
            <person name="Gsaller F."/>
        </authorList>
    </citation>
    <scope>FUNCTION</scope>
</reference>
<reference key="17">
    <citation type="journal article" date="2023" name="MBio">
        <title>Regulation of high-affinity iron acquisition, including acquisition mediated by the iron permease FtrA, is Coordinated by atrR, srbA, and sreA in Aspergillus fumigatus.</title>
        <authorList>
            <person name="Yap A."/>
            <person name="Volz R."/>
            <person name="Paul S."/>
            <person name="Moye-Rowley W.S."/>
            <person name="Haas H."/>
        </authorList>
    </citation>
    <scope>FUNCTION</scope>
</reference>
<sequence length="988" mass="108272">MSTPGIGGDFQLFSPLESTRRISQGNSLSVDQSSTDVASQDWTQWMRWDDEQAFPETANASPSSPFDLAFISPSASSGREASDAMHKDFSPDISLDFKSPSLGFFPGGDLNTNVSPQPDHVGAGSLSVHSNSPLSSIGASRKRKTGSDDDGSTMTSMFKAKQAPSKKRAHNVIEKRYRANLNEKIAELRDSVPSLRASYKQANGNSGDDDDDGVTSASKLNKASILSKATEYIRHLEIRNKRLEEENTALKIRLRQLDKAADQIVTSAASVSSPSDCTVSTESGASSSPSVFSHAEDVPSDHSPTSSHPPEGLIKVPDAWKRMRAAGSNESPYSQSYIQYKKTDSHSSQSGGGRMRSHLPNKYMLGALAGLMVLEGLGTEKKTESTAKGLLAVPLNLLNRVQLPSEVYSSAAFQYFWSSWHARAISHFLMLAILVVGSAFIVFVYLFNSDPRRQYSASKVAPDVTLSSCNFRRQAWLTSIQRVGVPRHRFFHEWYVVTSRCFEYVLRCLLGWKLYSLVTGVTEEDEKGRVKTWDIAIDAQLAGGDAEISKSRLVLTIFAAGTLPRSPMRMMLKALHCRILMWRVGEPGSWTFNVSNDVARSLARYQWDLARKMNAALPKDHPDSLPSHLATLLKIDCDDVMIDTIIQRAANLTWNRPTQEGTDDDEALLDVVEEDPAIQSSLDALAAWWSSHLLQGALLRYFEASSGGPDAKKSRNVFKSKIKLALDVAPQPSAAHTRALVMMAVFFERDRVANIGSVLAALPKEKGKNKQNQASNFLDSSLPISVREEISTAVRCAMIAAIFNARATGDTSLPATFTVEKAIHWFNRLPLDPVELTLLEFAAVYHLLHILASDIDYLASSDSSAPPSPMSKASDMLSSSSDDGEDGASQRNNNIIPHPMPNLGRVASELIYWARNAYNPAFYGFTSNLVKVIETECTSLCQTAGVHVADYSCVQEEKSKAKQAIDSKRRFAGGNEEASDNLLLSDES</sequence>
<accession>Q4WIN1</accession>